<organism>
    <name type="scientific">Zea mays</name>
    <name type="common">Maize</name>
    <dbReference type="NCBI Taxonomy" id="4577"/>
    <lineage>
        <taxon>Eukaryota</taxon>
        <taxon>Viridiplantae</taxon>
        <taxon>Streptophyta</taxon>
        <taxon>Embryophyta</taxon>
        <taxon>Tracheophyta</taxon>
        <taxon>Spermatophyta</taxon>
        <taxon>Magnoliopsida</taxon>
        <taxon>Liliopsida</taxon>
        <taxon>Poales</taxon>
        <taxon>Poaceae</taxon>
        <taxon>PACMAD clade</taxon>
        <taxon>Panicoideae</taxon>
        <taxon>Andropogonodae</taxon>
        <taxon>Andropogoneae</taxon>
        <taxon>Tripsacinae</taxon>
        <taxon>Zea</taxon>
    </lineage>
</organism>
<accession>P52580</accession>
<sequence>MASEKSKILVVGGTGYLGRHVVAASARLGHPTSALVRDTAPSDPAKAALLKSFQDAGVTLLKGDLYDQASLVSAVKGADVVISVLGSMQIADQSRLVDAIKEAGNVKRFFPSEFGLDVDRTGIVEPAKSILGAKVGIRRATEAAGIPYTYAVAGFFAGFGLPKVGQVLAPGPPADKAVVLGDGDTKAVFVEEGDIATYTVLAADDPRAENKVLYIKPPANTLSHNELLSLWEKKTGKTFRREYVPEEAVLKQIQESPIPLNIILAIGHAAFVRGEQTGFEIDPAKGVDASELYPDVKYTTVDEYLNRFL</sequence>
<protein>
    <recommendedName>
        <fullName evidence="5">Isoflavone reductase homolog IRL</fullName>
        <ecNumber evidence="2">1.3.1.-</ecNumber>
    </recommendedName>
</protein>
<feature type="chain" id="PRO_0000204549" description="Isoflavone reductase homolog IRL">
    <location>
        <begin position="1"/>
        <end position="309"/>
    </location>
</feature>
<feature type="active site" description="Proton acceptor" evidence="3">
    <location>
        <position position="134"/>
    </location>
</feature>
<feature type="binding site" evidence="3">
    <location>
        <begin position="12"/>
        <end position="18"/>
    </location>
    <ligand>
        <name>NADP(+)</name>
        <dbReference type="ChEBI" id="CHEBI:58349"/>
    </ligand>
</feature>
<feature type="binding site" evidence="3">
    <location>
        <position position="37"/>
    </location>
    <ligand>
        <name>NADP(+)</name>
        <dbReference type="ChEBI" id="CHEBI:58349"/>
    </ligand>
</feature>
<feature type="binding site" evidence="3">
    <location>
        <position position="46"/>
    </location>
    <ligand>
        <name>NADP(+)</name>
        <dbReference type="ChEBI" id="CHEBI:58349"/>
    </ligand>
</feature>
<feature type="binding site" evidence="3">
    <location>
        <position position="138"/>
    </location>
    <ligand>
        <name>NADP(+)</name>
        <dbReference type="ChEBI" id="CHEBI:58349"/>
    </ligand>
</feature>
<reference key="1">
    <citation type="journal article" date="1996" name="Plant Cell">
        <title>A maize gene encoding an NADPH binding enzyme highly homologous to isoflavone reductases is activated in response to sulfur starvation.</title>
        <authorList>
            <person name="Petrucco S."/>
            <person name="Bolchi A."/>
            <person name="Foroni C."/>
            <person name="Percudani R."/>
            <person name="Rossi G.L."/>
            <person name="Ottonello S."/>
        </authorList>
    </citation>
    <scope>NUCLEOTIDE SEQUENCE [MRNA]</scope>
    <scope>SUBUNIT</scope>
    <scope>INDUCTION BY SULFUR DEPRIVATION</scope>
    <scope>SUBCELLULAR LOCATION</scope>
    <source>
        <strain>cv. Dekalb XL72</strain>
    </source>
</reference>
<name>IFRH_MAIZE</name>
<evidence type="ECO:0000250" key="1">
    <source>
        <dbReference type="UniProtKB" id="B7UEU8"/>
    </source>
</evidence>
<evidence type="ECO:0000250" key="2">
    <source>
        <dbReference type="UniProtKB" id="P52579"/>
    </source>
</evidence>
<evidence type="ECO:0000250" key="3">
    <source>
        <dbReference type="UniProtKB" id="Q9LD14"/>
    </source>
</evidence>
<evidence type="ECO:0000269" key="4">
    <source>
    </source>
</evidence>
<evidence type="ECO:0000303" key="5">
    <source>
    </source>
</evidence>
<evidence type="ECO:0000305" key="6"/>
<comment type="function">
    <text evidence="2">Reductase that may be involved in a late step of alkaloid biosynthesis.</text>
</comment>
<comment type="pathway">
    <text evidence="1">Alkaloid biosynthesis.</text>
</comment>
<comment type="subunit">
    <text evidence="4">Monomer.</text>
</comment>
<comment type="subcellular location">
    <subcellularLocation>
        <location evidence="4">Cytoplasm</location>
    </subcellularLocation>
</comment>
<comment type="induction">
    <text>By sulfur deprivation.</text>
</comment>
<comment type="similarity">
    <text evidence="6">Belongs to the NmrA-type oxidoreductase family. Isoflavone reductase subfamily.</text>
</comment>
<dbReference type="EC" id="1.3.1.-" evidence="2"/>
<dbReference type="EMBL" id="U33318">
    <property type="protein sequence ID" value="AAC49210.1"/>
    <property type="molecule type" value="mRNA"/>
</dbReference>
<dbReference type="PIR" id="T02304">
    <property type="entry name" value="T02304"/>
</dbReference>
<dbReference type="SMR" id="P52580"/>
<dbReference type="FunCoup" id="P52580">
    <property type="interactions" value="3"/>
</dbReference>
<dbReference type="STRING" id="4577.P52580"/>
<dbReference type="PaxDb" id="4577-AC226235.2_FGP001"/>
<dbReference type="MaizeGDB" id="123916"/>
<dbReference type="eggNOG" id="ENOG502QPMY">
    <property type="taxonomic scope" value="Eukaryota"/>
</dbReference>
<dbReference type="InParanoid" id="P52580"/>
<dbReference type="Proteomes" id="UP000007305">
    <property type="component" value="Unplaced"/>
</dbReference>
<dbReference type="ExpressionAtlas" id="P52580">
    <property type="expression patterns" value="baseline and differential"/>
</dbReference>
<dbReference type="GO" id="GO:0005737">
    <property type="term" value="C:cytoplasm"/>
    <property type="evidence" value="ECO:0007669"/>
    <property type="project" value="UniProtKB-SubCell"/>
</dbReference>
<dbReference type="GO" id="GO:0070402">
    <property type="term" value="F:NADPH binding"/>
    <property type="evidence" value="ECO:0000314"/>
    <property type="project" value="AgBase"/>
</dbReference>
<dbReference type="GO" id="GO:0016491">
    <property type="term" value="F:oxidoreductase activity"/>
    <property type="evidence" value="ECO:0007669"/>
    <property type="project" value="UniProtKB-KW"/>
</dbReference>
<dbReference type="GO" id="GO:0009820">
    <property type="term" value="P:alkaloid metabolic process"/>
    <property type="evidence" value="ECO:0007669"/>
    <property type="project" value="UniProtKB-KW"/>
</dbReference>
<dbReference type="GO" id="GO:0010438">
    <property type="term" value="P:cellular response to sulfur starvation"/>
    <property type="evidence" value="ECO:0000270"/>
    <property type="project" value="AgBase"/>
</dbReference>
<dbReference type="CDD" id="cd05259">
    <property type="entry name" value="PCBER_SDR_a"/>
    <property type="match status" value="1"/>
</dbReference>
<dbReference type="Gene3D" id="3.40.50.720">
    <property type="entry name" value="NAD(P)-binding Rossmann-like Domain"/>
    <property type="match status" value="1"/>
</dbReference>
<dbReference type="Gene3D" id="3.90.25.10">
    <property type="entry name" value="UDP-galactose 4-epimerase, domain 1"/>
    <property type="match status" value="1"/>
</dbReference>
<dbReference type="InterPro" id="IPR036291">
    <property type="entry name" value="NAD(P)-bd_dom_sf"/>
</dbReference>
<dbReference type="InterPro" id="IPR008030">
    <property type="entry name" value="NmrA-like"/>
</dbReference>
<dbReference type="InterPro" id="IPR050608">
    <property type="entry name" value="NmrA-type/Isoflavone_red_sf"/>
</dbReference>
<dbReference type="InterPro" id="IPR045312">
    <property type="entry name" value="PCBER-like"/>
</dbReference>
<dbReference type="PANTHER" id="PTHR43349:SF1">
    <property type="entry name" value="ISOFLAVONE REDUCTASE HOMOLOG IRL"/>
    <property type="match status" value="1"/>
</dbReference>
<dbReference type="PANTHER" id="PTHR43349">
    <property type="entry name" value="PINORESINOL REDUCTASE-RELATED"/>
    <property type="match status" value="1"/>
</dbReference>
<dbReference type="Pfam" id="PF05368">
    <property type="entry name" value="NmrA"/>
    <property type="match status" value="1"/>
</dbReference>
<dbReference type="SUPFAM" id="SSF51735">
    <property type="entry name" value="NAD(P)-binding Rossmann-fold domains"/>
    <property type="match status" value="1"/>
</dbReference>
<gene>
    <name evidence="5" type="primary">IRL</name>
</gene>
<proteinExistence type="evidence at protein level"/>
<keyword id="KW-0017">Alkaloid metabolism</keyword>
<keyword id="KW-0963">Cytoplasm</keyword>
<keyword id="KW-0521">NADP</keyword>
<keyword id="KW-0560">Oxidoreductase</keyword>
<keyword id="KW-1185">Reference proteome</keyword>
<keyword id="KW-0346">Stress response</keyword>